<reference key="1">
    <citation type="journal article" date="1997" name="Science">
        <title>The complete genome sequence of Escherichia coli K-12.</title>
        <authorList>
            <person name="Blattner F.R."/>
            <person name="Plunkett G. III"/>
            <person name="Bloch C.A."/>
            <person name="Perna N.T."/>
            <person name="Burland V."/>
            <person name="Riley M."/>
            <person name="Collado-Vides J."/>
            <person name="Glasner J.D."/>
            <person name="Rode C.K."/>
            <person name="Mayhew G.F."/>
            <person name="Gregor J."/>
            <person name="Davis N.W."/>
            <person name="Kirkpatrick H.A."/>
            <person name="Goeden M.A."/>
            <person name="Rose D.J."/>
            <person name="Mau B."/>
            <person name="Shao Y."/>
        </authorList>
    </citation>
    <scope>NUCLEOTIDE SEQUENCE [LARGE SCALE GENOMIC DNA]</scope>
    <source>
        <strain>K12 / MG1655 / ATCC 47076</strain>
    </source>
</reference>
<reference key="2">
    <citation type="journal article" date="2006" name="Mol. Syst. Biol.">
        <title>Highly accurate genome sequences of Escherichia coli K-12 strains MG1655 and W3110.</title>
        <authorList>
            <person name="Hayashi K."/>
            <person name="Morooka N."/>
            <person name="Yamamoto Y."/>
            <person name="Fujita K."/>
            <person name="Isono K."/>
            <person name="Choi S."/>
            <person name="Ohtsubo E."/>
            <person name="Baba T."/>
            <person name="Wanner B.L."/>
            <person name="Mori H."/>
            <person name="Horiuchi T."/>
        </authorList>
    </citation>
    <scope>NUCLEOTIDE SEQUENCE [LARGE SCALE GENOMIC DNA]</scope>
    <source>
        <strain>K12 / W3110 / ATCC 27325 / DSM 5911</strain>
    </source>
</reference>
<reference key="3">
    <citation type="submission" date="1994-12" db="EMBL/GenBank/DDBJ databases">
        <authorList>
            <person name="Chatterjee P.K."/>
            <person name="Sternberg N.L."/>
        </authorList>
    </citation>
    <scope>NUCLEOTIDE SEQUENCE [GENOMIC DNA] OF 317-449</scope>
</reference>
<reference key="4">
    <citation type="journal article" date="2002" name="Mol. Microbiol.">
        <title>Quorum sensing Escherichia coli regulators B and C (QseBC): a novel two-component regulatory system involved in the regulation of flagella and motility by quorum sensing in E. coli.</title>
        <authorList>
            <person name="Sperandio V."/>
            <person name="Torres A.G."/>
            <person name="Kaper J.B."/>
        </authorList>
    </citation>
    <scope>FUNCTION</scope>
    <source>
        <strain>K12</strain>
        <strain>O157:H7</strain>
    </source>
</reference>
<reference key="5">
    <citation type="journal article" date="2005" name="Science">
        <title>Global topology analysis of the Escherichia coli inner membrane proteome.</title>
        <authorList>
            <person name="Daley D.O."/>
            <person name="Rapp M."/>
            <person name="Granseth E."/>
            <person name="Melen K."/>
            <person name="Drew D."/>
            <person name="von Heijne G."/>
        </authorList>
    </citation>
    <scope>TOPOLOGY [LARGE SCALE ANALYSIS]</scope>
    <source>
        <strain>K12 / MG1655 / ATCC 47076</strain>
    </source>
</reference>
<reference key="6">
    <citation type="journal article" date="2006" name="J. Bacteriol.">
        <title>Autoinducer 2 controls biofilm formation in Escherichia coli through a novel motility quorum-sensing regulator (MqsR, B3022).</title>
        <authorList>
            <person name="Gonzalez Barrios A.F."/>
            <person name="Zuo R."/>
            <person name="Hashimoto Y."/>
            <person name="Yang L."/>
            <person name="Bentley W.E."/>
            <person name="Wood T.K."/>
        </authorList>
    </citation>
    <scope>INDUCTION BY AI-2 AND MQSR</scope>
    <source>
        <strain>K12 / ATCC 25404 / DSM 5698 / NCIMB 11290</strain>
        <strain>K12 / DH5-alpha</strain>
        <strain>K12 / W3110 / ATCC 27325 / DSM 5911</strain>
    </source>
</reference>
<gene>
    <name type="primary">qseC</name>
    <name type="synonym">ygiY</name>
    <name type="ordered locus">b3026</name>
    <name type="ordered locus">JW2994</name>
</gene>
<sequence length="449" mass="50282">MKFTQRLSLRVRLTLIFLILASVTWLLSSFVAWKQTTDNVDELFDTQLMLFAKRLSTLDLNEINAADRMAQTPNRLKHGHVDDDALTFAIFTHDGRMVLNDGDNGEDIPYSYQREGFADGQLVGEDDPWRFVWMTSPDGKYRIVVGQEWEYREDMALAIVAGQLIPWLVALPIMLIIMMVLLGRELAPLNKLALALRMRDPDSEKPLNATGVPSEVRPLVESLNQLFARTHAMMVRERRFTSDAAHELRSPLTALKVQTEVAQLSDDDPQARKKALLQLHSGIDRATRLVDQLLTLSRLDSLDNLQDVAEIPLEDLLQSSVMDIYHTAQQAKIDVRLTLNAHSIKRTGQPLLLSLLVRNLLDNAVRYSPQGSVVDVTLNADNFIVRDNGPGVTPEALARIGERFYRPPGQTATGSGLGLSIVQRIAKLHGMNVEFGNAEQGGFEAKVSW</sequence>
<name>QSEC_ECOLI</name>
<accession>P40719</accession>
<accession>Q2M9H4</accession>
<organism>
    <name type="scientific">Escherichia coli (strain K12)</name>
    <dbReference type="NCBI Taxonomy" id="83333"/>
    <lineage>
        <taxon>Bacteria</taxon>
        <taxon>Pseudomonadati</taxon>
        <taxon>Pseudomonadota</taxon>
        <taxon>Gammaproteobacteria</taxon>
        <taxon>Enterobacterales</taxon>
        <taxon>Enterobacteriaceae</taxon>
        <taxon>Escherichia</taxon>
    </lineage>
</organism>
<evidence type="ECO:0000255" key="1"/>
<evidence type="ECO:0000255" key="2">
    <source>
        <dbReference type="PROSITE-ProRule" id="PRU00107"/>
    </source>
</evidence>
<evidence type="ECO:0000269" key="3">
    <source>
    </source>
</evidence>
<evidence type="ECO:0000269" key="4">
    <source>
    </source>
</evidence>
<evidence type="ECO:0007829" key="5">
    <source>
        <dbReference type="PDB" id="2KSE"/>
    </source>
</evidence>
<evidence type="ECO:0007829" key="6">
    <source>
        <dbReference type="PDB" id="3JZ3"/>
    </source>
</evidence>
<feature type="chain" id="PRO_0000074703" description="Sensor protein QseC">
    <location>
        <begin position="1"/>
        <end position="449"/>
    </location>
</feature>
<feature type="topological domain" description="Cytoplasmic" evidence="1">
    <location>
        <begin position="1"/>
        <end position="12"/>
    </location>
</feature>
<feature type="transmembrane region" description="Helical" evidence="1">
    <location>
        <begin position="13"/>
        <end position="33"/>
    </location>
</feature>
<feature type="topological domain" description="Periplasmic" evidence="1">
    <location>
        <begin position="34"/>
        <end position="156"/>
    </location>
</feature>
<feature type="transmembrane region" description="Helical" evidence="1">
    <location>
        <begin position="157"/>
        <end position="177"/>
    </location>
</feature>
<feature type="topological domain" description="Cytoplasmic" evidence="1">
    <location>
        <begin position="178"/>
        <end position="449"/>
    </location>
</feature>
<feature type="domain" description="Histidine kinase" evidence="2">
    <location>
        <begin position="243"/>
        <end position="449"/>
    </location>
</feature>
<feature type="modified residue" description="Phosphohistidine; by autocatalysis" evidence="2">
    <location>
        <position position="246"/>
    </location>
</feature>
<feature type="turn" evidence="5">
    <location>
        <begin position="3"/>
        <end position="5"/>
    </location>
</feature>
<feature type="helix" evidence="5">
    <location>
        <begin position="14"/>
        <end position="32"/>
    </location>
</feature>
<feature type="strand" evidence="5">
    <location>
        <begin position="156"/>
        <end position="158"/>
    </location>
</feature>
<feature type="helix" evidence="5">
    <location>
        <begin position="159"/>
        <end position="182"/>
    </location>
</feature>
<feature type="helix" evidence="6">
    <location>
        <begin position="283"/>
        <end position="297"/>
    </location>
</feature>
<feature type="strand" evidence="6">
    <location>
        <begin position="309"/>
        <end position="312"/>
    </location>
</feature>
<feature type="helix" evidence="6">
    <location>
        <begin position="313"/>
        <end position="330"/>
    </location>
</feature>
<feature type="strand" evidence="6">
    <location>
        <begin position="334"/>
        <end position="341"/>
    </location>
</feature>
<feature type="strand" evidence="6">
    <location>
        <begin position="345"/>
        <end position="348"/>
    </location>
</feature>
<feature type="helix" evidence="6">
    <location>
        <begin position="350"/>
        <end position="366"/>
    </location>
</feature>
<feature type="strand" evidence="6">
    <location>
        <begin position="373"/>
        <end position="378"/>
    </location>
</feature>
<feature type="strand" evidence="6">
    <location>
        <begin position="380"/>
        <end position="386"/>
    </location>
</feature>
<feature type="helix" evidence="6">
    <location>
        <begin position="419"/>
        <end position="428"/>
    </location>
</feature>
<feature type="strand" evidence="6">
    <location>
        <begin position="432"/>
        <end position="434"/>
    </location>
</feature>
<feature type="strand" evidence="6">
    <location>
        <begin position="441"/>
        <end position="448"/>
    </location>
</feature>
<protein>
    <recommendedName>
        <fullName>Sensor protein QseC</fullName>
        <ecNumber>2.7.13.3</ecNumber>
    </recommendedName>
</protein>
<keyword id="KW-0002">3D-structure</keyword>
<keyword id="KW-0067">ATP-binding</keyword>
<keyword id="KW-0997">Cell inner membrane</keyword>
<keyword id="KW-1003">Cell membrane</keyword>
<keyword id="KW-0418">Kinase</keyword>
<keyword id="KW-0472">Membrane</keyword>
<keyword id="KW-0547">Nucleotide-binding</keyword>
<keyword id="KW-0597">Phosphoprotein</keyword>
<keyword id="KW-1185">Reference proteome</keyword>
<keyword id="KW-0808">Transferase</keyword>
<keyword id="KW-0812">Transmembrane</keyword>
<keyword id="KW-1133">Transmembrane helix</keyword>
<keyword id="KW-0902">Two-component regulatory system</keyword>
<dbReference type="EC" id="2.7.13.3"/>
<dbReference type="EMBL" id="U28377">
    <property type="protein sequence ID" value="AAA69194.1"/>
    <property type="molecule type" value="Genomic_DNA"/>
</dbReference>
<dbReference type="EMBL" id="U00096">
    <property type="protein sequence ID" value="AAC76062.1"/>
    <property type="molecule type" value="Genomic_DNA"/>
</dbReference>
<dbReference type="EMBL" id="AP009048">
    <property type="protein sequence ID" value="BAE77082.1"/>
    <property type="molecule type" value="Genomic_DNA"/>
</dbReference>
<dbReference type="EMBL" id="U18656">
    <property type="status" value="NOT_ANNOTATED_CDS"/>
    <property type="molecule type" value="Genomic_DNA"/>
</dbReference>
<dbReference type="PIR" id="H65089">
    <property type="entry name" value="H65089"/>
</dbReference>
<dbReference type="RefSeq" id="NP_417498.1">
    <property type="nucleotide sequence ID" value="NC_000913.3"/>
</dbReference>
<dbReference type="RefSeq" id="WP_000673402.1">
    <property type="nucleotide sequence ID" value="NZ_SSZK01000023.1"/>
</dbReference>
<dbReference type="PDB" id="2KSE">
    <property type="method" value="NMR"/>
    <property type="chains" value="A=2-185"/>
</dbReference>
<dbReference type="PDB" id="3JZ3">
    <property type="method" value="X-ray"/>
    <property type="resolution" value="2.50 A"/>
    <property type="chains" value="A/B=236-449"/>
</dbReference>
<dbReference type="PDBsum" id="2KSE"/>
<dbReference type="PDBsum" id="3JZ3"/>
<dbReference type="SMR" id="P40719"/>
<dbReference type="BioGRID" id="4259459">
    <property type="interactions" value="23"/>
</dbReference>
<dbReference type="FunCoup" id="P40719">
    <property type="interactions" value="517"/>
</dbReference>
<dbReference type="IntAct" id="P40719">
    <property type="interactions" value="6"/>
</dbReference>
<dbReference type="STRING" id="511145.b3026"/>
<dbReference type="PaxDb" id="511145-b3026"/>
<dbReference type="EnsemblBacteria" id="AAC76062">
    <property type="protein sequence ID" value="AAC76062"/>
    <property type="gene ID" value="b3026"/>
</dbReference>
<dbReference type="GeneID" id="947174"/>
<dbReference type="KEGG" id="ecj:JW2994"/>
<dbReference type="KEGG" id="eco:b3026"/>
<dbReference type="KEGG" id="ecoc:C3026_16530"/>
<dbReference type="PATRIC" id="fig|1411691.4.peg.3704"/>
<dbReference type="EchoBASE" id="EB2845"/>
<dbReference type="eggNOG" id="COG0642">
    <property type="taxonomic scope" value="Bacteria"/>
</dbReference>
<dbReference type="HOGENOM" id="CLU_000445_89_37_6"/>
<dbReference type="InParanoid" id="P40719"/>
<dbReference type="OMA" id="WRIFWLP"/>
<dbReference type="OrthoDB" id="9809766at2"/>
<dbReference type="PhylomeDB" id="P40719"/>
<dbReference type="BioCyc" id="EcoCyc:EG12658-MONOMER"/>
<dbReference type="BRENDA" id="2.7.13.3">
    <property type="organism ID" value="2026"/>
</dbReference>
<dbReference type="EvolutionaryTrace" id="P40719"/>
<dbReference type="PHI-base" id="PHI:10174"/>
<dbReference type="PHI-base" id="PHI:6890"/>
<dbReference type="PRO" id="PR:P40719"/>
<dbReference type="Proteomes" id="UP000000625">
    <property type="component" value="Chromosome"/>
</dbReference>
<dbReference type="GO" id="GO:0005886">
    <property type="term" value="C:plasma membrane"/>
    <property type="evidence" value="ECO:0000318"/>
    <property type="project" value="GO_Central"/>
</dbReference>
<dbReference type="GO" id="GO:0005524">
    <property type="term" value="F:ATP binding"/>
    <property type="evidence" value="ECO:0007669"/>
    <property type="project" value="UniProtKB-KW"/>
</dbReference>
<dbReference type="GO" id="GO:0000155">
    <property type="term" value="F:phosphorelay sensor kinase activity"/>
    <property type="evidence" value="ECO:0007669"/>
    <property type="project" value="InterPro"/>
</dbReference>
<dbReference type="GO" id="GO:0036094">
    <property type="term" value="F:small molecule binding"/>
    <property type="evidence" value="ECO:0000269"/>
    <property type="project" value="DisProt"/>
</dbReference>
<dbReference type="GO" id="GO:0000160">
    <property type="term" value="P:phosphorelay signal transduction system"/>
    <property type="evidence" value="ECO:0000318"/>
    <property type="project" value="GO_Central"/>
</dbReference>
<dbReference type="GO" id="GO:2000145">
    <property type="term" value="P:regulation of cell motility"/>
    <property type="evidence" value="ECO:0000315"/>
    <property type="project" value="EcoCyc"/>
</dbReference>
<dbReference type="CDD" id="cd16940">
    <property type="entry name" value="HATPase_BasS-like"/>
    <property type="match status" value="1"/>
</dbReference>
<dbReference type="CDD" id="cd00082">
    <property type="entry name" value="HisKA"/>
    <property type="match status" value="1"/>
</dbReference>
<dbReference type="DisProt" id="DP00774"/>
<dbReference type="FunFam" id="1.20.5.1040:FF:000001">
    <property type="entry name" value="Sensor histidine kinase QseC"/>
    <property type="match status" value="1"/>
</dbReference>
<dbReference type="FunFam" id="1.20.5.1040:FF:000002">
    <property type="entry name" value="Sensor histidine kinase QseC"/>
    <property type="match status" value="1"/>
</dbReference>
<dbReference type="FunFam" id="1.10.287.130:FF:000035">
    <property type="entry name" value="Two-component sensor histidine kinase"/>
    <property type="match status" value="1"/>
</dbReference>
<dbReference type="FunFam" id="3.30.565.10:FF:000055">
    <property type="entry name" value="Two-component sensor histidine kinase"/>
    <property type="match status" value="1"/>
</dbReference>
<dbReference type="Gene3D" id="3.30.565.10">
    <property type="entry name" value="Histidine kinase-like ATPase, C-terminal domain"/>
    <property type="match status" value="1"/>
</dbReference>
<dbReference type="Gene3D" id="1.20.5.1040">
    <property type="entry name" value="Sensor protein qsec"/>
    <property type="match status" value="2"/>
</dbReference>
<dbReference type="InterPro" id="IPR013727">
    <property type="entry name" value="2CSK_N"/>
</dbReference>
<dbReference type="InterPro" id="IPR036890">
    <property type="entry name" value="HATPase_C_sf"/>
</dbReference>
<dbReference type="InterPro" id="IPR005467">
    <property type="entry name" value="His_kinase_dom"/>
</dbReference>
<dbReference type="InterPro" id="IPR003661">
    <property type="entry name" value="HisK_dim/P_dom"/>
</dbReference>
<dbReference type="InterPro" id="IPR036097">
    <property type="entry name" value="HisK_dim/P_sf"/>
</dbReference>
<dbReference type="InterPro" id="IPR004358">
    <property type="entry name" value="Sig_transdc_His_kin-like_C"/>
</dbReference>
<dbReference type="InterPro" id="IPR050428">
    <property type="entry name" value="TCS_sensor_his_kinase"/>
</dbReference>
<dbReference type="NCBIfam" id="NF007664">
    <property type="entry name" value="PRK10337.1"/>
    <property type="match status" value="1"/>
</dbReference>
<dbReference type="PANTHER" id="PTHR45436">
    <property type="entry name" value="SENSOR HISTIDINE KINASE YKOH"/>
    <property type="match status" value="1"/>
</dbReference>
<dbReference type="PANTHER" id="PTHR45436:SF14">
    <property type="entry name" value="SENSOR PROTEIN QSEC"/>
    <property type="match status" value="1"/>
</dbReference>
<dbReference type="Pfam" id="PF08521">
    <property type="entry name" value="2CSK_N"/>
    <property type="match status" value="1"/>
</dbReference>
<dbReference type="Pfam" id="PF02518">
    <property type="entry name" value="HATPase_c"/>
    <property type="match status" value="1"/>
</dbReference>
<dbReference type="Pfam" id="PF00512">
    <property type="entry name" value="HisKA"/>
    <property type="match status" value="1"/>
</dbReference>
<dbReference type="PRINTS" id="PR00344">
    <property type="entry name" value="BCTRLSENSOR"/>
</dbReference>
<dbReference type="SMART" id="SM00387">
    <property type="entry name" value="HATPase_c"/>
    <property type="match status" value="1"/>
</dbReference>
<dbReference type="SMART" id="SM00388">
    <property type="entry name" value="HisKA"/>
    <property type="match status" value="1"/>
</dbReference>
<dbReference type="SUPFAM" id="SSF55874">
    <property type="entry name" value="ATPase domain of HSP90 chaperone/DNA topoisomerase II/histidine kinase"/>
    <property type="match status" value="1"/>
</dbReference>
<dbReference type="SUPFAM" id="SSF47384">
    <property type="entry name" value="Homodimeric domain of signal transducing histidine kinase"/>
    <property type="match status" value="1"/>
</dbReference>
<dbReference type="PROSITE" id="PS50109">
    <property type="entry name" value="HIS_KIN"/>
    <property type="match status" value="1"/>
</dbReference>
<comment type="function">
    <text evidence="3">Member of a two-component regulatory system QseB/QseC. Activates the flagella regulon by activating transcription of FlhDC. May activate QseB by phosphorylation.</text>
</comment>
<comment type="catalytic activity">
    <reaction>
        <text>ATP + protein L-histidine = ADP + protein N-phospho-L-histidine.</text>
        <dbReference type="EC" id="2.7.13.3"/>
    </reaction>
</comment>
<comment type="subcellular location">
    <subcellularLocation>
        <location>Cell inner membrane</location>
        <topology>Multi-pass membrane protein</topology>
    </subcellularLocation>
</comment>
<comment type="induction">
    <text evidence="4">By the signal autoinducer AI-2, through MqsR.</text>
</comment>
<proteinExistence type="evidence at protein level"/>